<keyword id="KW-0325">Glycoprotein</keyword>
<keyword id="KW-0378">Hydrolase</keyword>
<keyword id="KW-0645">Protease</keyword>
<keyword id="KW-0964">Secreted</keyword>
<keyword id="KW-0720">Serine protease</keyword>
<keyword id="KW-0732">Signal</keyword>
<keyword id="KW-0843">Virulence</keyword>
<keyword id="KW-0865">Zymogen</keyword>
<organism>
    <name type="scientific">Trichophyton equinum</name>
    <name type="common">Horse ringworm fungus</name>
    <dbReference type="NCBI Taxonomy" id="63418"/>
    <lineage>
        <taxon>Eukaryota</taxon>
        <taxon>Fungi</taxon>
        <taxon>Dikarya</taxon>
        <taxon>Ascomycota</taxon>
        <taxon>Pezizomycotina</taxon>
        <taxon>Eurotiomycetes</taxon>
        <taxon>Eurotiomycetidae</taxon>
        <taxon>Onygenales</taxon>
        <taxon>Arthrodermataceae</taxon>
        <taxon>Trichophyton</taxon>
    </lineage>
</organism>
<sequence length="421" mass="45576">MQLLNFGLLLLPFVAGDLAPQPEPLLAGPSDVVPGQYIVTLKEGLTSAQIRDHKKWVSSVHRANLEGFAAGASGVETEGIMKHFHIHDLNMYSGGFDEKTVEDLSRNPYVKSVHPDQHVYLAKTVTQRQARWGLGYMSSKGKPVPLHSTLVDYSYDDKAGEGVWAYVLDTGINVNHVEFEGRAILGHNAIPNKPHTDEFGHGTYVAGIIAGKTYGVAKKANVVSAKAFDTGSSTYNYILETYDWIVRNITDSNRKNKAVINLSISGAKYQPFDDAVEKAFKAGIATVVAAGNDGKDAKNNTPASSPNAITVGAVRWENTRPSFSNYGKIVDIWAPGELIKSCWKGGNNATSTQSGTSAASPHVAGLVAYLMSTENLPSPSAVTARVLNLTIPNLVKDAKDSPNRVVYNGIQERKFTLPKYF</sequence>
<proteinExistence type="inferred from homology"/>
<evidence type="ECO:0000250" key="1"/>
<evidence type="ECO:0000255" key="2"/>
<evidence type="ECO:0000255" key="3">
    <source>
        <dbReference type="PROSITE-ProRule" id="PRU01240"/>
    </source>
</evidence>
<evidence type="ECO:0000305" key="4"/>
<gene>
    <name type="primary">SUB2</name>
</gene>
<accession>B6VA85</accession>
<dbReference type="EC" id="3.4.21.-"/>
<dbReference type="EMBL" id="FJ356723">
    <property type="protein sequence ID" value="ACJ04078.1"/>
    <property type="molecule type" value="Genomic_DNA"/>
</dbReference>
<dbReference type="SMR" id="B6VA85"/>
<dbReference type="GlyCosmos" id="B6VA85">
    <property type="glycosylation" value="4 sites, No reported glycans"/>
</dbReference>
<dbReference type="VEuPathDB" id="FungiDB:TEQG_08495"/>
<dbReference type="GO" id="GO:0005576">
    <property type="term" value="C:extracellular region"/>
    <property type="evidence" value="ECO:0007669"/>
    <property type="project" value="UniProtKB-SubCell"/>
</dbReference>
<dbReference type="GO" id="GO:0004252">
    <property type="term" value="F:serine-type endopeptidase activity"/>
    <property type="evidence" value="ECO:0007669"/>
    <property type="project" value="InterPro"/>
</dbReference>
<dbReference type="GO" id="GO:0006508">
    <property type="term" value="P:proteolysis"/>
    <property type="evidence" value="ECO:0007669"/>
    <property type="project" value="UniProtKB-KW"/>
</dbReference>
<dbReference type="CDD" id="cd04077">
    <property type="entry name" value="Peptidases_S8_PCSK9_ProteinaseK_like"/>
    <property type="match status" value="1"/>
</dbReference>
<dbReference type="FunFam" id="3.40.50.200:FF:000007">
    <property type="entry name" value="Subtilisin-like serine protease"/>
    <property type="match status" value="1"/>
</dbReference>
<dbReference type="Gene3D" id="3.30.70.80">
    <property type="entry name" value="Peptidase S8 propeptide/proteinase inhibitor I9"/>
    <property type="match status" value="1"/>
</dbReference>
<dbReference type="Gene3D" id="3.40.50.200">
    <property type="entry name" value="Peptidase S8/S53 domain"/>
    <property type="match status" value="1"/>
</dbReference>
<dbReference type="InterPro" id="IPR034193">
    <property type="entry name" value="PCSK9_ProteinaseK-like"/>
</dbReference>
<dbReference type="InterPro" id="IPR000209">
    <property type="entry name" value="Peptidase_S8/S53_dom"/>
</dbReference>
<dbReference type="InterPro" id="IPR036852">
    <property type="entry name" value="Peptidase_S8/S53_dom_sf"/>
</dbReference>
<dbReference type="InterPro" id="IPR023827">
    <property type="entry name" value="Peptidase_S8_Asp-AS"/>
</dbReference>
<dbReference type="InterPro" id="IPR022398">
    <property type="entry name" value="Peptidase_S8_His-AS"/>
</dbReference>
<dbReference type="InterPro" id="IPR023828">
    <property type="entry name" value="Peptidase_S8_Ser-AS"/>
</dbReference>
<dbReference type="InterPro" id="IPR050131">
    <property type="entry name" value="Peptidase_S8_subtilisin-like"/>
</dbReference>
<dbReference type="InterPro" id="IPR015500">
    <property type="entry name" value="Peptidase_S8_subtilisin-rel"/>
</dbReference>
<dbReference type="InterPro" id="IPR010259">
    <property type="entry name" value="S8pro/Inhibitor_I9"/>
</dbReference>
<dbReference type="InterPro" id="IPR037045">
    <property type="entry name" value="S8pro/Inhibitor_I9_sf"/>
</dbReference>
<dbReference type="PANTHER" id="PTHR43806:SF58">
    <property type="entry name" value="ALKALINE PROTEASE 1-RELATED"/>
    <property type="match status" value="1"/>
</dbReference>
<dbReference type="PANTHER" id="PTHR43806">
    <property type="entry name" value="PEPTIDASE S8"/>
    <property type="match status" value="1"/>
</dbReference>
<dbReference type="Pfam" id="PF05922">
    <property type="entry name" value="Inhibitor_I9"/>
    <property type="match status" value="1"/>
</dbReference>
<dbReference type="Pfam" id="PF00082">
    <property type="entry name" value="Peptidase_S8"/>
    <property type="match status" value="1"/>
</dbReference>
<dbReference type="PRINTS" id="PR00723">
    <property type="entry name" value="SUBTILISIN"/>
</dbReference>
<dbReference type="SUPFAM" id="SSF52743">
    <property type="entry name" value="Subtilisin-like"/>
    <property type="match status" value="1"/>
</dbReference>
<dbReference type="PROSITE" id="PS51892">
    <property type="entry name" value="SUBTILASE"/>
    <property type="match status" value="1"/>
</dbReference>
<dbReference type="PROSITE" id="PS00136">
    <property type="entry name" value="SUBTILASE_ASP"/>
    <property type="match status" value="1"/>
</dbReference>
<dbReference type="PROSITE" id="PS00137">
    <property type="entry name" value="SUBTILASE_HIS"/>
    <property type="match status" value="1"/>
</dbReference>
<dbReference type="PROSITE" id="PS00138">
    <property type="entry name" value="SUBTILASE_SER"/>
    <property type="match status" value="1"/>
</dbReference>
<comment type="function">
    <text evidence="1">Secreted subtilisin-like serine protease with keratinolytic activity that contributes to pathogenicity.</text>
</comment>
<comment type="subcellular location">
    <subcellularLocation>
        <location evidence="1">Secreted</location>
    </subcellularLocation>
</comment>
<comment type="similarity">
    <text evidence="4">Belongs to the peptidase S8 family.</text>
</comment>
<name>SUB2_TRIEQ</name>
<protein>
    <recommendedName>
        <fullName>Subtilisin-like protease 2</fullName>
        <ecNumber>3.4.21.-</ecNumber>
    </recommendedName>
</protein>
<feature type="signal peptide" evidence="2">
    <location>
        <begin position="1"/>
        <end position="16"/>
    </location>
</feature>
<feature type="propeptide" id="PRO_0000380768" evidence="1">
    <location>
        <begin position="17"/>
        <end position="122"/>
    </location>
</feature>
<feature type="chain" id="PRO_0000380769" description="Subtilisin-like protease 2">
    <location>
        <begin position="123"/>
        <end position="421"/>
    </location>
</feature>
<feature type="domain" description="Inhibitor I9" evidence="2">
    <location>
        <begin position="36"/>
        <end position="122"/>
    </location>
</feature>
<feature type="domain" description="Peptidase S8" evidence="3">
    <location>
        <begin position="131"/>
        <end position="421"/>
    </location>
</feature>
<feature type="active site" description="Charge relay system" evidence="3">
    <location>
        <position position="169"/>
    </location>
</feature>
<feature type="active site" description="Charge relay system" evidence="3">
    <location>
        <position position="201"/>
    </location>
</feature>
<feature type="active site" description="Charge relay system" evidence="3">
    <location>
        <position position="357"/>
    </location>
</feature>
<feature type="glycosylation site" description="N-linked (GlcNAc...) asparagine" evidence="2">
    <location>
        <position position="248"/>
    </location>
</feature>
<feature type="glycosylation site" description="N-linked (GlcNAc...) asparagine" evidence="2">
    <location>
        <position position="261"/>
    </location>
</feature>
<feature type="glycosylation site" description="N-linked (GlcNAc...) asparagine" evidence="2">
    <location>
        <position position="348"/>
    </location>
</feature>
<feature type="glycosylation site" description="N-linked (GlcNAc...) asparagine" evidence="2">
    <location>
        <position position="388"/>
    </location>
</feature>
<reference key="1">
    <citation type="submission" date="2008-10" db="EMBL/GenBank/DDBJ databases">
        <title>Comparing putative pathogenicity factors between Trichophyton tonsurans and Trichophyton equinum.</title>
        <authorList>
            <person name="Preuett B.L."/>
            <person name="Abdel-Rahman S.M."/>
        </authorList>
    </citation>
    <scope>NUCLEOTIDE SEQUENCE [GENOMIC DNA]</scope>
</reference>